<accession>B9MC99</accession>
<sequence>MLATHTRTVFYISDGTGITAETFGNAILAQFDIRPRHVRLPFIDTEDKAHQVVRQINHTAELEGKKPIVFTTLVNMSVLKIIEDGCRGMLLDMFGTFIRPLESELGVKSHHRVGRFSDISVSKEYSDRIEAINFSLDHDDGQSHRDLSGADVILIGVSRSGKTPTSLYLAMQCGLKVANYPLIPEDFERRQLPPALVPHRKKIFGLTIDPQRLSQIRNERRPGSRYADLVNCRNEVAEAEAMMRRSGIRWLSTTTKSIEEIATTILQEVRPERLQY</sequence>
<comment type="function">
    <text evidence="1">Bifunctional serine/threonine kinase and phosphorylase involved in the regulation of the phosphoenolpyruvate synthase (PEPS) by catalyzing its phosphorylation/dephosphorylation.</text>
</comment>
<comment type="catalytic activity">
    <reaction evidence="1">
        <text>[pyruvate, water dikinase] + ADP = [pyruvate, water dikinase]-phosphate + AMP + H(+)</text>
        <dbReference type="Rhea" id="RHEA:46020"/>
        <dbReference type="Rhea" id="RHEA-COMP:11425"/>
        <dbReference type="Rhea" id="RHEA-COMP:11426"/>
        <dbReference type="ChEBI" id="CHEBI:15378"/>
        <dbReference type="ChEBI" id="CHEBI:43176"/>
        <dbReference type="ChEBI" id="CHEBI:68546"/>
        <dbReference type="ChEBI" id="CHEBI:456215"/>
        <dbReference type="ChEBI" id="CHEBI:456216"/>
        <dbReference type="EC" id="2.7.11.33"/>
    </reaction>
</comment>
<comment type="catalytic activity">
    <reaction evidence="1">
        <text>[pyruvate, water dikinase]-phosphate + phosphate + H(+) = [pyruvate, water dikinase] + diphosphate</text>
        <dbReference type="Rhea" id="RHEA:48580"/>
        <dbReference type="Rhea" id="RHEA-COMP:11425"/>
        <dbReference type="Rhea" id="RHEA-COMP:11426"/>
        <dbReference type="ChEBI" id="CHEBI:15378"/>
        <dbReference type="ChEBI" id="CHEBI:33019"/>
        <dbReference type="ChEBI" id="CHEBI:43176"/>
        <dbReference type="ChEBI" id="CHEBI:43474"/>
        <dbReference type="ChEBI" id="CHEBI:68546"/>
        <dbReference type="EC" id="2.7.4.28"/>
    </reaction>
</comment>
<comment type="similarity">
    <text evidence="1">Belongs to the pyruvate, phosphate/water dikinase regulatory protein family. PSRP subfamily.</text>
</comment>
<feature type="chain" id="PRO_1000149706" description="Putative phosphoenolpyruvate synthase regulatory protein">
    <location>
        <begin position="1"/>
        <end position="276"/>
    </location>
</feature>
<feature type="binding site" evidence="1">
    <location>
        <begin position="156"/>
        <end position="163"/>
    </location>
    <ligand>
        <name>ADP</name>
        <dbReference type="ChEBI" id="CHEBI:456216"/>
    </ligand>
</feature>
<reference key="1">
    <citation type="submission" date="2009-01" db="EMBL/GenBank/DDBJ databases">
        <title>Complete sequence of Diaphorobacter sp. TPSY.</title>
        <authorList>
            <consortium name="US DOE Joint Genome Institute"/>
            <person name="Lucas S."/>
            <person name="Copeland A."/>
            <person name="Lapidus A."/>
            <person name="Glavina del Rio T."/>
            <person name="Tice H."/>
            <person name="Bruce D."/>
            <person name="Goodwin L."/>
            <person name="Pitluck S."/>
            <person name="Chertkov O."/>
            <person name="Brettin T."/>
            <person name="Detter J.C."/>
            <person name="Han C."/>
            <person name="Larimer F."/>
            <person name="Land M."/>
            <person name="Hauser L."/>
            <person name="Kyrpides N."/>
            <person name="Mikhailova N."/>
            <person name="Coates J.D."/>
        </authorList>
    </citation>
    <scope>NUCLEOTIDE SEQUENCE [LARGE SCALE GENOMIC DNA]</scope>
    <source>
        <strain>TPSY</strain>
    </source>
</reference>
<protein>
    <recommendedName>
        <fullName evidence="1">Putative phosphoenolpyruvate synthase regulatory protein</fullName>
        <shortName evidence="1">PEP synthase regulatory protein</shortName>
        <shortName evidence="1">PSRP</shortName>
        <ecNumber evidence="1">2.7.11.33</ecNumber>
        <ecNumber evidence="1">2.7.4.28</ecNumber>
    </recommendedName>
    <alternativeName>
        <fullName evidence="1">Pyruvate, water dikinase regulatory protein</fullName>
    </alternativeName>
</protein>
<gene>
    <name type="ordered locus">Dtpsy_2367</name>
</gene>
<proteinExistence type="inferred from homology"/>
<evidence type="ECO:0000255" key="1">
    <source>
        <dbReference type="HAMAP-Rule" id="MF_01062"/>
    </source>
</evidence>
<organism>
    <name type="scientific">Acidovorax ebreus (strain TPSY)</name>
    <name type="common">Diaphorobacter sp. (strain TPSY)</name>
    <dbReference type="NCBI Taxonomy" id="535289"/>
    <lineage>
        <taxon>Bacteria</taxon>
        <taxon>Pseudomonadati</taxon>
        <taxon>Pseudomonadota</taxon>
        <taxon>Betaproteobacteria</taxon>
        <taxon>Burkholderiales</taxon>
        <taxon>Comamonadaceae</taxon>
        <taxon>Diaphorobacter</taxon>
    </lineage>
</organism>
<keyword id="KW-0418">Kinase</keyword>
<keyword id="KW-0547">Nucleotide-binding</keyword>
<keyword id="KW-1185">Reference proteome</keyword>
<keyword id="KW-0723">Serine/threonine-protein kinase</keyword>
<keyword id="KW-0808">Transferase</keyword>
<dbReference type="EC" id="2.7.11.33" evidence="1"/>
<dbReference type="EC" id="2.7.4.28" evidence="1"/>
<dbReference type="EMBL" id="CP001392">
    <property type="protein sequence ID" value="ACM33804.1"/>
    <property type="molecule type" value="Genomic_DNA"/>
</dbReference>
<dbReference type="RefSeq" id="WP_011806033.1">
    <property type="nucleotide sequence ID" value="NC_011992.1"/>
</dbReference>
<dbReference type="SMR" id="B9MC99"/>
<dbReference type="KEGG" id="dia:Dtpsy_2367"/>
<dbReference type="eggNOG" id="COG1806">
    <property type="taxonomic scope" value="Bacteria"/>
</dbReference>
<dbReference type="HOGENOM" id="CLU_046206_1_0_4"/>
<dbReference type="Proteomes" id="UP000000450">
    <property type="component" value="Chromosome"/>
</dbReference>
<dbReference type="GO" id="GO:0043531">
    <property type="term" value="F:ADP binding"/>
    <property type="evidence" value="ECO:0007669"/>
    <property type="project" value="UniProtKB-UniRule"/>
</dbReference>
<dbReference type="GO" id="GO:0005524">
    <property type="term" value="F:ATP binding"/>
    <property type="evidence" value="ECO:0007669"/>
    <property type="project" value="InterPro"/>
</dbReference>
<dbReference type="GO" id="GO:0016776">
    <property type="term" value="F:phosphotransferase activity, phosphate group as acceptor"/>
    <property type="evidence" value="ECO:0007669"/>
    <property type="project" value="UniProtKB-UniRule"/>
</dbReference>
<dbReference type="GO" id="GO:0004674">
    <property type="term" value="F:protein serine/threonine kinase activity"/>
    <property type="evidence" value="ECO:0007669"/>
    <property type="project" value="UniProtKB-UniRule"/>
</dbReference>
<dbReference type="HAMAP" id="MF_01062">
    <property type="entry name" value="PSRP"/>
    <property type="match status" value="1"/>
</dbReference>
<dbReference type="InterPro" id="IPR005177">
    <property type="entry name" value="Kinase-pyrophosphorylase"/>
</dbReference>
<dbReference type="InterPro" id="IPR026530">
    <property type="entry name" value="PSRP"/>
</dbReference>
<dbReference type="NCBIfam" id="NF003742">
    <property type="entry name" value="PRK05339.1"/>
    <property type="match status" value="1"/>
</dbReference>
<dbReference type="PANTHER" id="PTHR31756">
    <property type="entry name" value="PYRUVATE, PHOSPHATE DIKINASE REGULATORY PROTEIN 1, CHLOROPLASTIC"/>
    <property type="match status" value="1"/>
</dbReference>
<dbReference type="PANTHER" id="PTHR31756:SF3">
    <property type="entry name" value="PYRUVATE, PHOSPHATE DIKINASE REGULATORY PROTEIN 1, CHLOROPLASTIC"/>
    <property type="match status" value="1"/>
</dbReference>
<dbReference type="Pfam" id="PF03618">
    <property type="entry name" value="Kinase-PPPase"/>
    <property type="match status" value="1"/>
</dbReference>
<name>PSRP_ACIET</name>